<evidence type="ECO:0000250" key="1">
    <source>
        <dbReference type="UniProtKB" id="P69851"/>
    </source>
</evidence>
<evidence type="ECO:0000250" key="2">
    <source>
        <dbReference type="UniProtKB" id="Q50HP4"/>
    </source>
</evidence>
<evidence type="ECO:0000255" key="3"/>
<evidence type="ECO:0000305" key="4"/>
<feature type="chain" id="PRO_0000176050" description="DASH complex subunit DAD4">
    <location>
        <begin position="1"/>
        <end position="72"/>
    </location>
</feature>
<feature type="coiled-coil region" evidence="3">
    <location>
        <begin position="18"/>
        <end position="53"/>
    </location>
</feature>
<sequence>MENPYEKVQSNILARIIGNVERLNQSVVILNQELRRVNTKNKNLELMSQMCENYRESVDFQLQATSKKQDPL</sequence>
<protein>
    <recommendedName>
        <fullName>DASH complex subunit DAD4</fullName>
    </recommendedName>
    <alternativeName>
        <fullName>Outer kinetochore protein DAD4</fullName>
    </alternativeName>
</protein>
<reference key="1">
    <citation type="journal article" date="2004" name="Nature">
        <title>Genome evolution in yeasts.</title>
        <authorList>
            <person name="Dujon B."/>
            <person name="Sherman D."/>
            <person name="Fischer G."/>
            <person name="Durrens P."/>
            <person name="Casaregola S."/>
            <person name="Lafontaine I."/>
            <person name="de Montigny J."/>
            <person name="Marck C."/>
            <person name="Neuveglise C."/>
            <person name="Talla E."/>
            <person name="Goffard N."/>
            <person name="Frangeul L."/>
            <person name="Aigle M."/>
            <person name="Anthouard V."/>
            <person name="Babour A."/>
            <person name="Barbe V."/>
            <person name="Barnay S."/>
            <person name="Blanchin S."/>
            <person name="Beckerich J.-M."/>
            <person name="Beyne E."/>
            <person name="Bleykasten C."/>
            <person name="Boisrame A."/>
            <person name="Boyer J."/>
            <person name="Cattolico L."/>
            <person name="Confanioleri F."/>
            <person name="de Daruvar A."/>
            <person name="Despons L."/>
            <person name="Fabre E."/>
            <person name="Fairhead C."/>
            <person name="Ferry-Dumazet H."/>
            <person name="Groppi A."/>
            <person name="Hantraye F."/>
            <person name="Hennequin C."/>
            <person name="Jauniaux N."/>
            <person name="Joyet P."/>
            <person name="Kachouri R."/>
            <person name="Kerrest A."/>
            <person name="Koszul R."/>
            <person name="Lemaire M."/>
            <person name="Lesur I."/>
            <person name="Ma L."/>
            <person name="Muller H."/>
            <person name="Nicaud J.-M."/>
            <person name="Nikolski M."/>
            <person name="Oztas S."/>
            <person name="Ozier-Kalogeropoulos O."/>
            <person name="Pellenz S."/>
            <person name="Potier S."/>
            <person name="Richard G.-F."/>
            <person name="Straub M.-L."/>
            <person name="Suleau A."/>
            <person name="Swennen D."/>
            <person name="Tekaia F."/>
            <person name="Wesolowski-Louvel M."/>
            <person name="Westhof E."/>
            <person name="Wirth B."/>
            <person name="Zeniou-Meyer M."/>
            <person name="Zivanovic Y."/>
            <person name="Bolotin-Fukuhara M."/>
            <person name="Thierry A."/>
            <person name="Bouchier C."/>
            <person name="Caudron B."/>
            <person name="Scarpelli C."/>
            <person name="Gaillardin C."/>
            <person name="Weissenbach J."/>
            <person name="Wincker P."/>
            <person name="Souciet J.-L."/>
        </authorList>
    </citation>
    <scope>NUCLEOTIDE SEQUENCE [LARGE SCALE GENOMIC DNA]</scope>
    <source>
        <strain>ATCC 8585 / CBS 2359 / DSM 70799 / NBRC 1267 / NRRL Y-1140 / WM37</strain>
    </source>
</reference>
<organism>
    <name type="scientific">Kluyveromyces lactis (strain ATCC 8585 / CBS 2359 / DSM 70799 / NBRC 1267 / NRRL Y-1140 / WM37)</name>
    <name type="common">Yeast</name>
    <name type="synonym">Candida sphaerica</name>
    <dbReference type="NCBI Taxonomy" id="284590"/>
    <lineage>
        <taxon>Eukaryota</taxon>
        <taxon>Fungi</taxon>
        <taxon>Dikarya</taxon>
        <taxon>Ascomycota</taxon>
        <taxon>Saccharomycotina</taxon>
        <taxon>Saccharomycetes</taxon>
        <taxon>Saccharomycetales</taxon>
        <taxon>Saccharomycetaceae</taxon>
        <taxon>Kluyveromyces</taxon>
    </lineage>
</organism>
<keyword id="KW-0131">Cell cycle</keyword>
<keyword id="KW-0132">Cell division</keyword>
<keyword id="KW-0137">Centromere</keyword>
<keyword id="KW-0158">Chromosome</keyword>
<keyword id="KW-0159">Chromosome partition</keyword>
<keyword id="KW-0175">Coiled coil</keyword>
<keyword id="KW-0963">Cytoplasm</keyword>
<keyword id="KW-0206">Cytoskeleton</keyword>
<keyword id="KW-0995">Kinetochore</keyword>
<keyword id="KW-0493">Microtubule</keyword>
<keyword id="KW-0498">Mitosis</keyword>
<keyword id="KW-0539">Nucleus</keyword>
<keyword id="KW-1185">Reference proteome</keyword>
<gene>
    <name type="primary">DAD4</name>
    <name type="ordered locus">KLLA0C16775g</name>
</gene>
<name>DAD4_KLULA</name>
<dbReference type="EMBL" id="CR382123">
    <property type="protein sequence ID" value="CAH01801.1"/>
    <property type="molecule type" value="Genomic_DNA"/>
</dbReference>
<dbReference type="RefSeq" id="XP_452950.1">
    <property type="nucleotide sequence ID" value="XM_452950.1"/>
</dbReference>
<dbReference type="SMR" id="Q6CSY9"/>
<dbReference type="FunCoup" id="Q6CSY9">
    <property type="interactions" value="29"/>
</dbReference>
<dbReference type="STRING" id="284590.Q6CSY9"/>
<dbReference type="PaxDb" id="284590-Q6CSY9"/>
<dbReference type="KEGG" id="kla:KLLA0_C16775g"/>
<dbReference type="eggNOG" id="ENOG502S890">
    <property type="taxonomic scope" value="Eukaryota"/>
</dbReference>
<dbReference type="HOGENOM" id="CLU_177920_0_0_1"/>
<dbReference type="InParanoid" id="Q6CSY9"/>
<dbReference type="OMA" id="SQMWANY"/>
<dbReference type="Proteomes" id="UP000000598">
    <property type="component" value="Chromosome C"/>
</dbReference>
<dbReference type="GO" id="GO:0005737">
    <property type="term" value="C:cytoplasm"/>
    <property type="evidence" value="ECO:0007669"/>
    <property type="project" value="UniProtKB-KW"/>
</dbReference>
<dbReference type="GO" id="GO:0042729">
    <property type="term" value="C:DASH complex"/>
    <property type="evidence" value="ECO:0000250"/>
    <property type="project" value="UniProtKB"/>
</dbReference>
<dbReference type="GO" id="GO:0005874">
    <property type="term" value="C:microtubule"/>
    <property type="evidence" value="ECO:0007669"/>
    <property type="project" value="UniProtKB-KW"/>
</dbReference>
<dbReference type="GO" id="GO:0072686">
    <property type="term" value="C:mitotic spindle"/>
    <property type="evidence" value="ECO:0007669"/>
    <property type="project" value="InterPro"/>
</dbReference>
<dbReference type="GO" id="GO:0008608">
    <property type="term" value="P:attachment of spindle microtubules to kinetochore"/>
    <property type="evidence" value="ECO:0000250"/>
    <property type="project" value="UniProtKB"/>
</dbReference>
<dbReference type="GO" id="GO:0051301">
    <property type="term" value="P:cell division"/>
    <property type="evidence" value="ECO:0007669"/>
    <property type="project" value="UniProtKB-KW"/>
</dbReference>
<dbReference type="GO" id="GO:1990758">
    <property type="term" value="P:mitotic sister chromatid biorientation"/>
    <property type="evidence" value="ECO:0000250"/>
    <property type="project" value="UniProtKB"/>
</dbReference>
<dbReference type="GO" id="GO:1990976">
    <property type="term" value="P:protein transport along microtubule to mitotic spindle pole body"/>
    <property type="evidence" value="ECO:0000250"/>
    <property type="project" value="UniProtKB"/>
</dbReference>
<dbReference type="InterPro" id="IPR013959">
    <property type="entry name" value="DASH_Dad4"/>
</dbReference>
<dbReference type="PANTHER" id="PTHR28222">
    <property type="entry name" value="DASH COMPLEX SUBUNIT DAD4"/>
    <property type="match status" value="1"/>
</dbReference>
<dbReference type="PANTHER" id="PTHR28222:SF1">
    <property type="entry name" value="DASH COMPLEX SUBUNIT DAD4"/>
    <property type="match status" value="1"/>
</dbReference>
<dbReference type="Pfam" id="PF08650">
    <property type="entry name" value="DASH_Dad4"/>
    <property type="match status" value="1"/>
</dbReference>
<accession>Q6CSY9</accession>
<comment type="function">
    <text evidence="1">Component of the DASH complex that connects microtubules with kinetochores and couples microtubule depolymerisation to chromosome movement; it is involved in retrieving kinetochores to the spindle poles before their re-orientation on the spindle in early mitosis and allows microtubule depolymerization to pull chromosomes apart and resist detachment during anaphase. Kinetochores, consisting of a centromere-associated inner segment and a microtubule-contacting outer segment, play a crucial role in chromosome segregation by mediating the physical connection between centromeric DNA and microtubules. Kinetochores also serve as an input point for the spindle assembly checkpoint, which delays anaphase until all chromosomes have bioriented on the mitotic spindle.</text>
</comment>
<comment type="subunit">
    <text evidence="1 2">Component of the DASH complex consisting of ASK1, DAD1, DAD2, DAD3, DAD4, DAM1, DUO1, HSK3, SPC19 and SPC34, with a stoichiometry of one copy of each subunit per complex. Multiple DASH complexes oligomerize to form a ring that encircles spindle microtubules and organizes the rod-like NDC80 complexes of the outer kinetochore. DASH complex oligomerization strengthens microtubule attachments (By similarity). On cytoplasmic microtubules, DASH complexes appear to form patches instead of rings (By similarity).</text>
</comment>
<comment type="subcellular location">
    <subcellularLocation>
        <location evidence="1">Nucleus</location>
    </subcellularLocation>
    <subcellularLocation>
        <location evidence="1">Cytoplasm</location>
        <location evidence="1">Cytoskeleton</location>
        <location evidence="1">Spindle</location>
    </subcellularLocation>
    <subcellularLocation>
        <location evidence="1">Chromosome</location>
        <location evidence="1">Centromere</location>
        <location evidence="1">Kinetochore</location>
    </subcellularLocation>
</comment>
<comment type="similarity">
    <text evidence="4">Belongs to the DASH complex DAD4 family.</text>
</comment>
<proteinExistence type="inferred from homology"/>